<name>CCR6_HUMAN</name>
<gene>
    <name type="primary">CCR6</name>
    <name type="synonym">CKRL3</name>
    <name type="synonym">CMKBR6</name>
    <name type="synonym">GPR29</name>
    <name type="synonym">STRL22</name>
</gene>
<organism>
    <name type="scientific">Homo sapiens</name>
    <name type="common">Human</name>
    <dbReference type="NCBI Taxonomy" id="9606"/>
    <lineage>
        <taxon>Eukaryota</taxon>
        <taxon>Metazoa</taxon>
        <taxon>Chordata</taxon>
        <taxon>Craniata</taxon>
        <taxon>Vertebrata</taxon>
        <taxon>Euteleostomi</taxon>
        <taxon>Mammalia</taxon>
        <taxon>Eutheria</taxon>
        <taxon>Euarchontoglires</taxon>
        <taxon>Primates</taxon>
        <taxon>Haplorrhini</taxon>
        <taxon>Catarrhini</taxon>
        <taxon>Hominidae</taxon>
        <taxon>Homo</taxon>
    </lineage>
</organism>
<dbReference type="EMBL" id="U45984">
    <property type="protein sequence ID" value="AAB62714.1"/>
    <property type="molecule type" value="Genomic_DNA"/>
</dbReference>
<dbReference type="EMBL" id="Z79784">
    <property type="protein sequence ID" value="CAB02144.1"/>
    <property type="status" value="ALT_INIT"/>
    <property type="molecule type" value="Genomic_DNA"/>
</dbReference>
<dbReference type="EMBL" id="U60000">
    <property type="protein sequence ID" value="AAB06949.1"/>
    <property type="molecule type" value="mRNA"/>
</dbReference>
<dbReference type="EMBL" id="U68030">
    <property type="protein sequence ID" value="AAC51124.1"/>
    <property type="molecule type" value="mRNA"/>
</dbReference>
<dbReference type="EMBL" id="U68032">
    <property type="protein sequence ID" value="AAC51125.1"/>
    <property type="molecule type" value="Genomic_DNA"/>
</dbReference>
<dbReference type="EMBL" id="AY242126">
    <property type="protein sequence ID" value="AAO92293.1"/>
    <property type="molecule type" value="mRNA"/>
</dbReference>
<dbReference type="EMBL" id="AL121935">
    <property type="status" value="NOT_ANNOTATED_CDS"/>
    <property type="molecule type" value="Genomic_DNA"/>
</dbReference>
<dbReference type="EMBL" id="CH471051">
    <property type="protein sequence ID" value="EAW47506.1"/>
    <property type="molecule type" value="Genomic_DNA"/>
</dbReference>
<dbReference type="EMBL" id="CH471051">
    <property type="protein sequence ID" value="EAW47507.1"/>
    <property type="molecule type" value="Genomic_DNA"/>
</dbReference>
<dbReference type="EMBL" id="BC037960">
    <property type="protein sequence ID" value="AAH37960.1"/>
    <property type="molecule type" value="mRNA"/>
</dbReference>
<dbReference type="CCDS" id="CCDS5298.1"/>
<dbReference type="PIR" id="JC5068">
    <property type="entry name" value="JC5068"/>
</dbReference>
<dbReference type="RefSeq" id="NP_001381511.1">
    <property type="nucleotide sequence ID" value="NM_001394582.1"/>
</dbReference>
<dbReference type="RefSeq" id="NP_004358.2">
    <property type="nucleotide sequence ID" value="NM_004367.5"/>
</dbReference>
<dbReference type="RefSeq" id="NP_113597.2">
    <property type="nucleotide sequence ID" value="NM_031409.3"/>
</dbReference>
<dbReference type="PDB" id="6WWZ">
    <property type="method" value="EM"/>
    <property type="resolution" value="3.34 A"/>
    <property type="chains" value="R=2-374"/>
</dbReference>
<dbReference type="PDBsum" id="6WWZ"/>
<dbReference type="EMDB" id="EMD-21950"/>
<dbReference type="SMR" id="P51684"/>
<dbReference type="BioGRID" id="107640">
    <property type="interactions" value="88"/>
</dbReference>
<dbReference type="DIP" id="DIP-5865N"/>
<dbReference type="FunCoup" id="P51684">
    <property type="interactions" value="696"/>
</dbReference>
<dbReference type="IntAct" id="P51684">
    <property type="interactions" value="83"/>
</dbReference>
<dbReference type="MINT" id="P51684"/>
<dbReference type="STRING" id="9606.ENSP00000343952"/>
<dbReference type="BindingDB" id="P51684"/>
<dbReference type="ChEMBL" id="CHEMBL4423"/>
<dbReference type="GuidetoPHARMACOLOGY" id="63"/>
<dbReference type="GlyCosmos" id="P51684">
    <property type="glycosylation" value="2 sites, No reported glycans"/>
</dbReference>
<dbReference type="GlyGen" id="P51684">
    <property type="glycosylation" value="2 sites"/>
</dbReference>
<dbReference type="iPTMnet" id="P51684"/>
<dbReference type="PhosphoSitePlus" id="P51684"/>
<dbReference type="BioMuta" id="CCR6"/>
<dbReference type="DMDM" id="2851567"/>
<dbReference type="MassIVE" id="P51684"/>
<dbReference type="PaxDb" id="9606-ENSP00000343952"/>
<dbReference type="PeptideAtlas" id="P51684"/>
<dbReference type="ProteomicsDB" id="56368"/>
<dbReference type="Antibodypedia" id="2930">
    <property type="antibodies" value="864 antibodies from 40 providers"/>
</dbReference>
<dbReference type="DNASU" id="1235"/>
<dbReference type="Ensembl" id="ENST00000341935.10">
    <property type="protein sequence ID" value="ENSP00000343952.5"/>
    <property type="gene ID" value="ENSG00000112486.18"/>
</dbReference>
<dbReference type="Ensembl" id="ENST00000349984.6">
    <property type="protein sequence ID" value="ENSP00000339393.4"/>
    <property type="gene ID" value="ENSG00000112486.18"/>
</dbReference>
<dbReference type="Ensembl" id="ENST00000400926.5">
    <property type="protein sequence ID" value="ENSP00000383715.2"/>
    <property type="gene ID" value="ENSG00000112486.18"/>
</dbReference>
<dbReference type="Ensembl" id="ENST00000643861.1">
    <property type="protein sequence ID" value="ENSP00000493637.1"/>
    <property type="gene ID" value="ENSG00000112486.18"/>
</dbReference>
<dbReference type="GeneID" id="1235"/>
<dbReference type="KEGG" id="hsa:1235"/>
<dbReference type="MANE-Select" id="ENST00000341935.10">
    <property type="protein sequence ID" value="ENSP00000343952.5"/>
    <property type="RefSeq nucleotide sequence ID" value="NM_031409.4"/>
    <property type="RefSeq protein sequence ID" value="NP_113597.2"/>
</dbReference>
<dbReference type="UCSC" id="uc003qvm.5">
    <property type="organism name" value="human"/>
</dbReference>
<dbReference type="AGR" id="HGNC:1607"/>
<dbReference type="CTD" id="1235"/>
<dbReference type="DisGeNET" id="1235"/>
<dbReference type="GeneCards" id="CCR6"/>
<dbReference type="HGNC" id="HGNC:1607">
    <property type="gene designation" value="CCR6"/>
</dbReference>
<dbReference type="HPA" id="ENSG00000112486">
    <property type="expression patterns" value="Tissue enriched (lymphoid)"/>
</dbReference>
<dbReference type="MalaCards" id="CCR6"/>
<dbReference type="MIM" id="601835">
    <property type="type" value="gene"/>
</dbReference>
<dbReference type="neXtProt" id="NX_P51684"/>
<dbReference type="OpenTargets" id="ENSG00000112486"/>
<dbReference type="Orphanet" id="220393">
    <property type="disease" value="Diffuse cutaneous systemic sclerosis"/>
</dbReference>
<dbReference type="Orphanet" id="220402">
    <property type="disease" value="Limited cutaneous systemic sclerosis"/>
</dbReference>
<dbReference type="PharmGKB" id="PA26171"/>
<dbReference type="VEuPathDB" id="HostDB:ENSG00000112486"/>
<dbReference type="eggNOG" id="KOG3656">
    <property type="taxonomic scope" value="Eukaryota"/>
</dbReference>
<dbReference type="GeneTree" id="ENSGT01030000234667"/>
<dbReference type="HOGENOM" id="CLU_009579_8_3_1"/>
<dbReference type="InParanoid" id="P51684"/>
<dbReference type="OMA" id="TKEICDH"/>
<dbReference type="OrthoDB" id="9828427at2759"/>
<dbReference type="PAN-GO" id="P51684">
    <property type="GO annotations" value="9 GO annotations based on evolutionary models"/>
</dbReference>
<dbReference type="PhylomeDB" id="P51684"/>
<dbReference type="TreeFam" id="TF330966"/>
<dbReference type="PathwayCommons" id="P51684"/>
<dbReference type="Reactome" id="R-HSA-1461957">
    <property type="pathway name" value="Beta defensins"/>
</dbReference>
<dbReference type="Reactome" id="R-HSA-380108">
    <property type="pathway name" value="Chemokine receptors bind chemokines"/>
</dbReference>
<dbReference type="Reactome" id="R-HSA-418594">
    <property type="pathway name" value="G alpha (i) signalling events"/>
</dbReference>
<dbReference type="SignaLink" id="P51684"/>
<dbReference type="SIGNOR" id="P51684"/>
<dbReference type="BioGRID-ORCS" id="1235">
    <property type="hits" value="9 hits in 1145 CRISPR screens"/>
</dbReference>
<dbReference type="ChiTaRS" id="CCR6">
    <property type="organism name" value="human"/>
</dbReference>
<dbReference type="GeneWiki" id="C-C_chemokine_receptor_type_6"/>
<dbReference type="GenomeRNAi" id="1235"/>
<dbReference type="Pharos" id="P51684">
    <property type="development level" value="Tchem"/>
</dbReference>
<dbReference type="PRO" id="PR:P51684"/>
<dbReference type="Proteomes" id="UP000005640">
    <property type="component" value="Chromosome 6"/>
</dbReference>
<dbReference type="RNAct" id="P51684">
    <property type="molecule type" value="protein"/>
</dbReference>
<dbReference type="Bgee" id="ENSG00000112486">
    <property type="expression patterns" value="Expressed in lymph node and 78 other cell types or tissues"/>
</dbReference>
<dbReference type="GO" id="GO:0009986">
    <property type="term" value="C:cell surface"/>
    <property type="evidence" value="ECO:0000314"/>
    <property type="project" value="UniProtKB"/>
</dbReference>
<dbReference type="GO" id="GO:0009897">
    <property type="term" value="C:external side of plasma membrane"/>
    <property type="evidence" value="ECO:0000318"/>
    <property type="project" value="GO_Central"/>
</dbReference>
<dbReference type="GO" id="GO:0005886">
    <property type="term" value="C:plasma membrane"/>
    <property type="evidence" value="ECO:0000304"/>
    <property type="project" value="Reactome"/>
</dbReference>
<dbReference type="GO" id="GO:0036126">
    <property type="term" value="C:sperm flagellum"/>
    <property type="evidence" value="ECO:0000314"/>
    <property type="project" value="UniProtKB"/>
</dbReference>
<dbReference type="GO" id="GO:0097225">
    <property type="term" value="C:sperm midpiece"/>
    <property type="evidence" value="ECO:0000314"/>
    <property type="project" value="UniProtKB"/>
</dbReference>
<dbReference type="GO" id="GO:0097524">
    <property type="term" value="C:sperm plasma membrane"/>
    <property type="evidence" value="ECO:0000314"/>
    <property type="project" value="UniProtKB"/>
</dbReference>
<dbReference type="GO" id="GO:0097228">
    <property type="term" value="C:sperm principal piece"/>
    <property type="evidence" value="ECO:0000314"/>
    <property type="project" value="UniProtKB"/>
</dbReference>
<dbReference type="GO" id="GO:0019957">
    <property type="term" value="F:C-C chemokine binding"/>
    <property type="evidence" value="ECO:0000314"/>
    <property type="project" value="UniProtKB"/>
</dbReference>
<dbReference type="GO" id="GO:0016493">
    <property type="term" value="F:C-C chemokine receptor activity"/>
    <property type="evidence" value="ECO:0000314"/>
    <property type="project" value="UniProtKB"/>
</dbReference>
<dbReference type="GO" id="GO:0004950">
    <property type="term" value="F:chemokine receptor activity"/>
    <property type="evidence" value="ECO:0000304"/>
    <property type="project" value="ProtInc"/>
</dbReference>
<dbReference type="GO" id="GO:0038023">
    <property type="term" value="F:signaling receptor activity"/>
    <property type="evidence" value="ECO:0000304"/>
    <property type="project" value="ProtInc"/>
</dbReference>
<dbReference type="GO" id="GO:0019722">
    <property type="term" value="P:calcium-mediated signaling"/>
    <property type="evidence" value="ECO:0000315"/>
    <property type="project" value="UniProtKB"/>
</dbReference>
<dbReference type="GO" id="GO:0060326">
    <property type="term" value="P:cell chemotaxis"/>
    <property type="evidence" value="ECO:0000314"/>
    <property type="project" value="UniProtKB"/>
</dbReference>
<dbReference type="GO" id="GO:0006968">
    <property type="term" value="P:cellular defense response"/>
    <property type="evidence" value="ECO:0000304"/>
    <property type="project" value="ProtInc"/>
</dbReference>
<dbReference type="GO" id="GO:0006935">
    <property type="term" value="P:chemotaxis"/>
    <property type="evidence" value="ECO:0000314"/>
    <property type="project" value="UniProtKB"/>
</dbReference>
<dbReference type="GO" id="GO:0002407">
    <property type="term" value="P:dendritic cell chemotaxis"/>
    <property type="evidence" value="ECO:0000304"/>
    <property type="project" value="BHF-UCL"/>
</dbReference>
<dbReference type="GO" id="GO:1904155">
    <property type="term" value="P:DN2 thymocyte differentiation"/>
    <property type="evidence" value="ECO:0000250"/>
    <property type="project" value="UniProtKB"/>
</dbReference>
<dbReference type="GO" id="GO:1904156">
    <property type="term" value="P:DN3 thymocyte differentiation"/>
    <property type="evidence" value="ECO:0000250"/>
    <property type="project" value="UniProtKB"/>
</dbReference>
<dbReference type="GO" id="GO:0006959">
    <property type="term" value="P:humoral immune response"/>
    <property type="evidence" value="ECO:0000304"/>
    <property type="project" value="ProtInc"/>
</dbReference>
<dbReference type="GO" id="GO:0006955">
    <property type="term" value="P:immune response"/>
    <property type="evidence" value="ECO:0000318"/>
    <property type="project" value="GO_Central"/>
</dbReference>
<dbReference type="GO" id="GO:0048290">
    <property type="term" value="P:isotype switching to IgA isotypes"/>
    <property type="evidence" value="ECO:0000250"/>
    <property type="project" value="UniProtKB"/>
</dbReference>
<dbReference type="GO" id="GO:0002523">
    <property type="term" value="P:leukocyte migration involved in inflammatory response"/>
    <property type="evidence" value="ECO:0000250"/>
    <property type="project" value="UniProtKB"/>
</dbReference>
<dbReference type="GO" id="GO:0072676">
    <property type="term" value="P:lymphocyte migration"/>
    <property type="evidence" value="ECO:0000250"/>
    <property type="project" value="UniProtKB"/>
</dbReference>
<dbReference type="GO" id="GO:0007204">
    <property type="term" value="P:positive regulation of cytosolic calcium ion concentration"/>
    <property type="evidence" value="ECO:0000318"/>
    <property type="project" value="GO_Central"/>
</dbReference>
<dbReference type="GO" id="GO:2000510">
    <property type="term" value="P:positive regulation of dendritic cell chemotaxis"/>
    <property type="evidence" value="ECO:0000318"/>
    <property type="project" value="GO_Central"/>
</dbReference>
<dbReference type="GO" id="GO:0060474">
    <property type="term" value="P:positive regulation of flagellated sperm motility involved in capacitation"/>
    <property type="evidence" value="ECO:0000314"/>
    <property type="project" value="UniProtKB"/>
</dbReference>
<dbReference type="GO" id="GO:2000404">
    <property type="term" value="P:regulation of T cell migration"/>
    <property type="evidence" value="ECO:0000250"/>
    <property type="project" value="UniProtKB"/>
</dbReference>
<dbReference type="GO" id="GO:0007165">
    <property type="term" value="P:signal transduction"/>
    <property type="evidence" value="ECO:0000304"/>
    <property type="project" value="ProtInc"/>
</dbReference>
<dbReference type="GO" id="GO:0072678">
    <property type="term" value="P:T cell migration"/>
    <property type="evidence" value="ECO:0000250"/>
    <property type="project" value="UniProtKB"/>
</dbReference>
<dbReference type="GO" id="GO:0072679">
    <property type="term" value="P:thymocyte migration"/>
    <property type="evidence" value="ECO:0000250"/>
    <property type="project" value="UniProtKB"/>
</dbReference>
<dbReference type="CDD" id="cd15172">
    <property type="entry name" value="7tmA_CCR6"/>
    <property type="match status" value="1"/>
</dbReference>
<dbReference type="FunFam" id="1.20.1070.10:FF:000035">
    <property type="entry name" value="C-C chemokine receptor type 6"/>
    <property type="match status" value="1"/>
</dbReference>
<dbReference type="Gene3D" id="1.20.1070.10">
    <property type="entry name" value="Rhodopsin 7-helix transmembrane proteins"/>
    <property type="match status" value="1"/>
</dbReference>
<dbReference type="InterPro" id="IPR050119">
    <property type="entry name" value="CCR1-9-like"/>
</dbReference>
<dbReference type="InterPro" id="IPR004067">
    <property type="entry name" value="Chemokine_CCR6"/>
</dbReference>
<dbReference type="InterPro" id="IPR000355">
    <property type="entry name" value="Chemokine_rcpt"/>
</dbReference>
<dbReference type="InterPro" id="IPR000276">
    <property type="entry name" value="GPCR_Rhodpsn"/>
</dbReference>
<dbReference type="InterPro" id="IPR017452">
    <property type="entry name" value="GPCR_Rhodpsn_7TM"/>
</dbReference>
<dbReference type="PANTHER" id="PTHR10489:SF611">
    <property type="entry name" value="C-C CHEMOKINE RECEPTOR TYPE 6"/>
    <property type="match status" value="1"/>
</dbReference>
<dbReference type="PANTHER" id="PTHR10489">
    <property type="entry name" value="CELL ADHESION MOLECULE"/>
    <property type="match status" value="1"/>
</dbReference>
<dbReference type="Pfam" id="PF00001">
    <property type="entry name" value="7tm_1"/>
    <property type="match status" value="1"/>
</dbReference>
<dbReference type="PRINTS" id="PR00657">
    <property type="entry name" value="CCCHEMOKINER"/>
</dbReference>
<dbReference type="PRINTS" id="PR01529">
    <property type="entry name" value="CHEMOKINER6"/>
</dbReference>
<dbReference type="PRINTS" id="PR00237">
    <property type="entry name" value="GPCRRHODOPSN"/>
</dbReference>
<dbReference type="SUPFAM" id="SSF81321">
    <property type="entry name" value="Family A G protein-coupled receptor-like"/>
    <property type="match status" value="1"/>
</dbReference>
<dbReference type="PROSITE" id="PS00237">
    <property type="entry name" value="G_PROTEIN_RECEP_F1_1"/>
    <property type="match status" value="1"/>
</dbReference>
<dbReference type="PROSITE" id="PS50262">
    <property type="entry name" value="G_PROTEIN_RECEP_F1_2"/>
    <property type="match status" value="1"/>
</dbReference>
<comment type="function">
    <text evidence="1 5 6 7 9 10 11">Receptor for the C-C type chemokine CCL20 (PubMed:9169459). Binds to CCL20 and subsequently transduces a signal by increasing the intracellular calcium ion levels (PubMed:20068036). Although CCL20 is its major ligand it can also act as a receptor for non-chemokine ligands such as beta-defensins (PubMed:25585877). Binds to defensin DEFB1 leading to increase in intracellular calcium ions and cAMP levels. Its binding to DEFB1 is essential for the function of DEFB1 in regulating sperm motility and bactericidal activity (PubMed:25122636). Binds to defensins DEFB4 and DEFB4A/B and mediates their chemotactic effects (PubMed:20068036). The ligand-receptor pair CCL20-CCR6 is responsible for the chemotaxis of dendritic cells (DC), effector/ memory T-cells and B-cells and plays an important role at skin and mucosal surfaces under homeostatic and inflammatory conditions, as well as in pathology, including cancer and various autoimmune diseases. CCR6-mediated signals are essential for immune responses to microbes in the intestinal mucosa and in the modulation of inflammatory responses initiated by tissue insult and trauma (PubMed:21376174). CCR6 is essential for the recruitment of both the pro-inflammatory IL17 producing helper T-cells (Th17) and the regulatory T-cells (Treg) to sites of inflammation. Required for the normal migration of Th17 cells in Peyers-patches and other related tissue sites of the intestine and plays a role in regulating effector T-cell balance and distribution in inflamed intestine. Plays an important role in the coordination of early thymocyte precursor migration events important for normal subsequent thymocyte precursor development, but is not required for the formation of normal thymic natural regulatory T-cells (nTregs). Required for optimal differentiation of DN2 and DN3 thymocyte precursors. Essential for B-cell localization in the subepithelial dome of Peyers-patches and for efficient B-cell isotype switching to IgA in the Peyers-patches. Essential for appropriate anatomical distribution of memory B-cells in the spleen and for the secondary recall response of memory B-cells (By similarity). Positively regulates sperm motility and chemotaxis via its binding to CCL20 (PubMed:23765988).</text>
</comment>
<comment type="subcellular location">
    <subcellularLocation>
        <location evidence="6">Cell membrane</location>
        <topology evidence="2">Multi-pass membrane protein</topology>
    </subcellularLocation>
    <subcellularLocation>
        <location evidence="4">Cell surface</location>
    </subcellularLocation>
</comment>
<comment type="tissue specificity">
    <text evidence="6 7 8">Sperm. Mainly localized in the tail and in the postacrosomal region but is also found in the midpiece and basal region in a small percentage of sperm cells. Reduced levels found in the sperms of asthenozoospermia and leukocytospermia patients (at protein level). Spleen, lymph nodes, appendix, and fetal liver. Expressed in lymphocytes, T-cells and B-cells but not in natural killer cells, monocytes or granulocytes.</text>
</comment>
<comment type="induction">
    <text>By IL2/interleukin-2.</text>
</comment>
<comment type="similarity">
    <text evidence="3">Belongs to the G-protein coupled receptor 1 family.</text>
</comment>
<comment type="caution">
    <text evidence="12">It is uncertain whether Met-1 or Met-6 is the initiator.</text>
</comment>
<comment type="sequence caution" evidence="12">
    <conflict type="erroneous initiation">
        <sequence resource="EMBL-CDS" id="CAB02144"/>
    </conflict>
</comment>
<comment type="online information" name="Wikipedia">
    <link uri="https://en.wikipedia.org/wiki/CC_chemokine_receptors"/>
    <text>CC chemokine receptors entry</text>
</comment>
<reference key="1">
    <citation type="journal article" date="1997" name="J. Biol. Chem.">
        <title>Identification of CCR6, the specific receptor for a novel lymphocyte-directed CC chemokine LARC.</title>
        <authorList>
            <person name="Baba M."/>
            <person name="Imai T."/>
            <person name="Nishimura M."/>
            <person name="Kakizaki M."/>
            <person name="Takagi S."/>
            <person name="Hieshima K."/>
            <person name="Nomiyama H."/>
            <person name="Yoshie O."/>
        </authorList>
    </citation>
    <scope>NUCLEOTIDE SEQUENCE [GENOMIC DNA]</scope>
    <scope>FUNCTION</scope>
</reference>
<reference key="2">
    <citation type="submission" date="1996-04" db="EMBL/GenBank/DDBJ databases">
        <authorList>
            <person name="Lautens L.L."/>
            <person name="Modi W."/>
            <person name="Bonner T.I."/>
        </authorList>
    </citation>
    <scope>NUCLEOTIDE SEQUENCE</scope>
</reference>
<reference key="3">
    <citation type="journal article" date="1996" name="Biochem. Biophys. Res. Commun.">
        <title>Molecular cloning and RNA expression of two new human chemokine receptor-like genes.</title>
        <authorList>
            <person name="Zaballos A."/>
            <person name="Varona R."/>
            <person name="Gutierrez J."/>
            <person name="Lind P."/>
            <person name="Marquez G."/>
        </authorList>
    </citation>
    <scope>NUCLEOTIDE SEQUENCE [GENOMIC DNA]</scope>
    <scope>TISSUE SPECIFICITY</scope>
</reference>
<reference key="4">
    <citation type="submission" date="1996-09" db="EMBL/GenBank/DDBJ databases">
        <authorList>
            <person name="McCoy R."/>
            <person name="Perlmutter D.H."/>
        </authorList>
    </citation>
    <scope>NUCLEOTIDE SEQUENCE [MRNA]</scope>
</reference>
<reference key="5">
    <citation type="journal article" date="1997" name="Genomics">
        <title>Cloning of STRL22, a new human gene encoding a G-protein-coupled receptor related to chemokine receptors and located on chromosome 6q27.</title>
        <authorList>
            <person name="Liao F."/>
            <person name="Lee H.-H."/>
            <person name="Farber J.M."/>
        </authorList>
    </citation>
    <scope>NUCLEOTIDE SEQUENCE [GENOMIC DNA]</scope>
</reference>
<reference key="6">
    <citation type="submission" date="2003-02" db="EMBL/GenBank/DDBJ databases">
        <title>cDNA clones of human proteins involved in signal transduction sequenced by the Guthrie cDNA resource center (www.cdna.org).</title>
        <authorList>
            <person name="Warren C.N."/>
            <person name="Aronstam R.S."/>
            <person name="Sharma S.V."/>
        </authorList>
    </citation>
    <scope>NUCLEOTIDE SEQUENCE [LARGE SCALE MRNA]</scope>
</reference>
<reference key="7">
    <citation type="journal article" date="2003" name="Nature">
        <title>The DNA sequence and analysis of human chromosome 6.</title>
        <authorList>
            <person name="Mungall A.J."/>
            <person name="Palmer S.A."/>
            <person name="Sims S.K."/>
            <person name="Edwards C.A."/>
            <person name="Ashurst J.L."/>
            <person name="Wilming L."/>
            <person name="Jones M.C."/>
            <person name="Horton R."/>
            <person name="Hunt S.E."/>
            <person name="Scott C.E."/>
            <person name="Gilbert J.G.R."/>
            <person name="Clamp M.E."/>
            <person name="Bethel G."/>
            <person name="Milne S."/>
            <person name="Ainscough R."/>
            <person name="Almeida J.P."/>
            <person name="Ambrose K.D."/>
            <person name="Andrews T.D."/>
            <person name="Ashwell R.I.S."/>
            <person name="Babbage A.K."/>
            <person name="Bagguley C.L."/>
            <person name="Bailey J."/>
            <person name="Banerjee R."/>
            <person name="Barker D.J."/>
            <person name="Barlow K.F."/>
            <person name="Bates K."/>
            <person name="Beare D.M."/>
            <person name="Beasley H."/>
            <person name="Beasley O."/>
            <person name="Bird C.P."/>
            <person name="Blakey S.E."/>
            <person name="Bray-Allen S."/>
            <person name="Brook J."/>
            <person name="Brown A.J."/>
            <person name="Brown J.Y."/>
            <person name="Burford D.C."/>
            <person name="Burrill W."/>
            <person name="Burton J."/>
            <person name="Carder C."/>
            <person name="Carter N.P."/>
            <person name="Chapman J.C."/>
            <person name="Clark S.Y."/>
            <person name="Clark G."/>
            <person name="Clee C.M."/>
            <person name="Clegg S."/>
            <person name="Cobley V."/>
            <person name="Collier R.E."/>
            <person name="Collins J.E."/>
            <person name="Colman L.K."/>
            <person name="Corby N.R."/>
            <person name="Coville G.J."/>
            <person name="Culley K.M."/>
            <person name="Dhami P."/>
            <person name="Davies J."/>
            <person name="Dunn M."/>
            <person name="Earthrowl M.E."/>
            <person name="Ellington A.E."/>
            <person name="Evans K.A."/>
            <person name="Faulkner L."/>
            <person name="Francis M.D."/>
            <person name="Frankish A."/>
            <person name="Frankland J."/>
            <person name="French L."/>
            <person name="Garner P."/>
            <person name="Garnett J."/>
            <person name="Ghori M.J."/>
            <person name="Gilby L.M."/>
            <person name="Gillson C.J."/>
            <person name="Glithero R.J."/>
            <person name="Grafham D.V."/>
            <person name="Grant M."/>
            <person name="Gribble S."/>
            <person name="Griffiths C."/>
            <person name="Griffiths M.N.D."/>
            <person name="Hall R."/>
            <person name="Halls K.S."/>
            <person name="Hammond S."/>
            <person name="Harley J.L."/>
            <person name="Hart E.A."/>
            <person name="Heath P.D."/>
            <person name="Heathcott R."/>
            <person name="Holmes S.J."/>
            <person name="Howden P.J."/>
            <person name="Howe K.L."/>
            <person name="Howell G.R."/>
            <person name="Huckle E."/>
            <person name="Humphray S.J."/>
            <person name="Humphries M.D."/>
            <person name="Hunt A.R."/>
            <person name="Johnson C.M."/>
            <person name="Joy A.A."/>
            <person name="Kay M."/>
            <person name="Keenan S.J."/>
            <person name="Kimberley A.M."/>
            <person name="King A."/>
            <person name="Laird G.K."/>
            <person name="Langford C."/>
            <person name="Lawlor S."/>
            <person name="Leongamornlert D.A."/>
            <person name="Leversha M."/>
            <person name="Lloyd C.R."/>
            <person name="Lloyd D.M."/>
            <person name="Loveland J.E."/>
            <person name="Lovell J."/>
            <person name="Martin S."/>
            <person name="Mashreghi-Mohammadi M."/>
            <person name="Maslen G.L."/>
            <person name="Matthews L."/>
            <person name="McCann O.T."/>
            <person name="McLaren S.J."/>
            <person name="McLay K."/>
            <person name="McMurray A."/>
            <person name="Moore M.J.F."/>
            <person name="Mullikin J.C."/>
            <person name="Niblett D."/>
            <person name="Nickerson T."/>
            <person name="Novik K.L."/>
            <person name="Oliver K."/>
            <person name="Overton-Larty E.K."/>
            <person name="Parker A."/>
            <person name="Patel R."/>
            <person name="Pearce A.V."/>
            <person name="Peck A.I."/>
            <person name="Phillimore B.J.C.T."/>
            <person name="Phillips S."/>
            <person name="Plumb R.W."/>
            <person name="Porter K.M."/>
            <person name="Ramsey Y."/>
            <person name="Ranby S.A."/>
            <person name="Rice C.M."/>
            <person name="Ross M.T."/>
            <person name="Searle S.M."/>
            <person name="Sehra H.K."/>
            <person name="Sheridan E."/>
            <person name="Skuce C.D."/>
            <person name="Smith S."/>
            <person name="Smith M."/>
            <person name="Spraggon L."/>
            <person name="Squares S.L."/>
            <person name="Steward C.A."/>
            <person name="Sycamore N."/>
            <person name="Tamlyn-Hall G."/>
            <person name="Tester J."/>
            <person name="Theaker A.J."/>
            <person name="Thomas D.W."/>
            <person name="Thorpe A."/>
            <person name="Tracey A."/>
            <person name="Tromans A."/>
            <person name="Tubby B."/>
            <person name="Wall M."/>
            <person name="Wallis J.M."/>
            <person name="West A.P."/>
            <person name="White S.S."/>
            <person name="Whitehead S.L."/>
            <person name="Whittaker H."/>
            <person name="Wild A."/>
            <person name="Willey D.J."/>
            <person name="Wilmer T.E."/>
            <person name="Wood J.M."/>
            <person name="Wray P.W."/>
            <person name="Wyatt J.C."/>
            <person name="Young L."/>
            <person name="Younger R.M."/>
            <person name="Bentley D.R."/>
            <person name="Coulson A."/>
            <person name="Durbin R.M."/>
            <person name="Hubbard T."/>
            <person name="Sulston J.E."/>
            <person name="Dunham I."/>
            <person name="Rogers J."/>
            <person name="Beck S."/>
        </authorList>
    </citation>
    <scope>NUCLEOTIDE SEQUENCE [LARGE SCALE GENOMIC DNA]</scope>
</reference>
<reference key="8">
    <citation type="submission" date="2005-09" db="EMBL/GenBank/DDBJ databases">
        <authorList>
            <person name="Mural R.J."/>
            <person name="Istrail S."/>
            <person name="Sutton G.G."/>
            <person name="Florea L."/>
            <person name="Halpern A.L."/>
            <person name="Mobarry C.M."/>
            <person name="Lippert R."/>
            <person name="Walenz B."/>
            <person name="Shatkay H."/>
            <person name="Dew I."/>
            <person name="Miller J.R."/>
            <person name="Flanigan M.J."/>
            <person name="Edwards N.J."/>
            <person name="Bolanos R."/>
            <person name="Fasulo D."/>
            <person name="Halldorsson B.V."/>
            <person name="Hannenhalli S."/>
            <person name="Turner R."/>
            <person name="Yooseph S."/>
            <person name="Lu F."/>
            <person name="Nusskern D.R."/>
            <person name="Shue B.C."/>
            <person name="Zheng X.H."/>
            <person name="Zhong F."/>
            <person name="Delcher A.L."/>
            <person name="Huson D.H."/>
            <person name="Kravitz S.A."/>
            <person name="Mouchard L."/>
            <person name="Reinert K."/>
            <person name="Remington K.A."/>
            <person name="Clark A.G."/>
            <person name="Waterman M.S."/>
            <person name="Eichler E.E."/>
            <person name="Adams M.D."/>
            <person name="Hunkapiller M.W."/>
            <person name="Myers E.W."/>
            <person name="Venter J.C."/>
        </authorList>
    </citation>
    <scope>NUCLEOTIDE SEQUENCE [LARGE SCALE GENOMIC DNA]</scope>
</reference>
<reference key="9">
    <citation type="journal article" date="2004" name="Genome Res.">
        <title>The status, quality, and expansion of the NIH full-length cDNA project: the Mammalian Gene Collection (MGC).</title>
        <authorList>
            <consortium name="The MGC Project Team"/>
        </authorList>
    </citation>
    <scope>NUCLEOTIDE SEQUENCE [LARGE SCALE MRNA]</scope>
    <source>
        <tissue>Pancreas</tissue>
    </source>
</reference>
<reference key="10">
    <citation type="journal article" date="2002" name="Biochemistry">
        <title>Mutating the four extracellular cysteines in the chemokine receptor CCR6 reveals their differing roles in receptor trafficking, ligand binding, and signaling.</title>
        <authorList>
            <person name="Ai L.S."/>
            <person name="Liao F."/>
        </authorList>
    </citation>
    <scope>DISULFIDE BOND</scope>
    <scope>MUTAGENESIS OF CYS-36; CYS-57; CYS-118; CYS-131; CYS-138; CYS-168; CYS-197; CYS-233; CYS-266; CYS-288; CYS-309; CYS-310; CYS-336 AND CYS-348</scope>
    <scope>SUBCELLULAR LOCATION</scope>
</reference>
<reference key="11">
    <citation type="journal article" date="2010" name="J. Biol. Chem.">
        <title>Specific binding and chemotactic activity of mBD4 and its functional orthologue hBD2 to CCR6-expressing cells.</title>
        <authorList>
            <person name="Roehrl J."/>
            <person name="Yang D."/>
            <person name="Oppenheim J.J."/>
            <person name="Hehlgans T."/>
        </authorList>
    </citation>
    <scope>FUNCTION</scope>
    <scope>BINDING TO CCL20; DEFB4 AND DEFB4A</scope>
</reference>
<reference key="12">
    <citation type="journal article" date="2011" name="Exp. Cell Res.">
        <title>CCR6 as a mediator of immunity in the lung and gut.</title>
        <authorList>
            <person name="Ito T."/>
            <person name="Carson W.F. IV"/>
            <person name="Cavassani K.A."/>
            <person name="Connett J.M."/>
            <person name="Kunkel S.L."/>
        </authorList>
    </citation>
    <scope>REVIEW</scope>
    <scope>FUNCTION</scope>
</reference>
<reference key="13">
    <citation type="journal article" date="2014" name="J. Cell. Physiol.">
        <title>A role for the chemokine receptor CCR6 in mammalian sperm motility and chemotaxis.</title>
        <authorList>
            <person name="Caballero-Campo P."/>
            <person name="Buffone M.G."/>
            <person name="Benencia F."/>
            <person name="Conejo-Garcia J.R."/>
            <person name="Rinaudo P.F."/>
            <person name="Gerton G.L."/>
        </authorList>
    </citation>
    <scope>FUNCTION</scope>
    <scope>SUBCELLULAR LOCATION</scope>
    <scope>TISSUE SPECIFICITY</scope>
</reference>
<reference key="14">
    <citation type="journal article" date="2014" name="Sci. Transl. Med.">
        <title>Deficient human beta-defensin 1 underlies male infertility associated with poor sperm motility and genital tract infection.</title>
        <authorList>
            <person name="Diao R."/>
            <person name="Fok K.L."/>
            <person name="Chen H."/>
            <person name="Yu M.K."/>
            <person name="Duan Y."/>
            <person name="Chung C.M."/>
            <person name="Li Z."/>
            <person name="Wu H."/>
            <person name="Li Z."/>
            <person name="Zhang H."/>
            <person name="Ji Z."/>
            <person name="Zhen W."/>
            <person name="Ng C.F."/>
            <person name="Gui Y."/>
            <person name="Cai Z."/>
            <person name="Chan H.C."/>
        </authorList>
    </citation>
    <scope>FUNCTION</scope>
    <scope>TISSUE SPECIFICITY</scope>
    <scope>BINDING TO DEFB1</scope>
</reference>
<reference key="15">
    <citation type="journal article" date="2015" name="Cytokine">
        <title>The relationship between CCR6 and its binding partners: does the CCR6-CCL20 axis have to be extended?</title>
        <authorList>
            <person name="Lee A.Y."/>
            <person name="Phan T.K."/>
            <person name="Hulett M.D."/>
            <person name="Koerner H."/>
        </authorList>
    </citation>
    <scope>REVIEW</scope>
    <scope>FUNCTION</scope>
</reference>
<protein>
    <recommendedName>
        <fullName>C-C chemokine receptor type 6</fullName>
        <shortName>C-C CKR-6</shortName>
        <shortName>CC-CKR-6</shortName>
        <shortName>CCR-6</shortName>
    </recommendedName>
    <alternativeName>
        <fullName>Chemokine receptor-like 3</fullName>
        <shortName>CKR-L3</shortName>
    </alternativeName>
    <alternativeName>
        <fullName>DRY6</fullName>
    </alternativeName>
    <alternativeName>
        <fullName>G-protein coupled receptor 29</fullName>
    </alternativeName>
    <alternativeName>
        <fullName>GPR-CY4</fullName>
        <shortName>GPRCY4</shortName>
    </alternativeName>
    <alternativeName>
        <fullName>LARC receptor</fullName>
    </alternativeName>
    <cdAntigenName>CD196</cdAntigenName>
</protein>
<proteinExistence type="evidence at protein level"/>
<keyword id="KW-0002">3D-structure</keyword>
<keyword id="KW-1003">Cell membrane</keyword>
<keyword id="KW-1015">Disulfide bond</keyword>
<keyword id="KW-0297">G-protein coupled receptor</keyword>
<keyword id="KW-0325">Glycoprotein</keyword>
<keyword id="KW-0472">Membrane</keyword>
<keyword id="KW-1267">Proteomics identification</keyword>
<keyword id="KW-0675">Receptor</keyword>
<keyword id="KW-1185">Reference proteome</keyword>
<keyword id="KW-0807">Transducer</keyword>
<keyword id="KW-0812">Transmembrane</keyword>
<keyword id="KW-1133">Transmembrane helix</keyword>
<sequence length="374" mass="42494">MSGESMNFSDVFDSSEDYFVSVNTSYYSVDSEMLLCSLQEVRQFSRLFVPIAYSLICVFGLLGNILVVITFAFYKKARSMTDVYLLNMAIADILFVLTLPFWAVSHATGAWVFSNATCKLLKGIYAINFNCGMLLLTCISMDRYIAIVQATKSFRLRSRTLPRSKIICLVVWGLSVIISSSTFVFNQKYNTQGSDVCEPKYQTVSEPIRWKLLMLGLELLFGFFIPLMFMIFCYTFIVKTLVQAQNSKRHKAIRVIIAVVLVFLACQIPHNMVLLVTAANLGKMNRSCQSEKLIGYTKTVTEVLAFLHCCLNPVLYAFIGQKFRNYFLKILKDLWCVRRKYKSSGFSCAGRYSENISRQTSETADNDNASSFTM</sequence>
<accession>P51684</accession>
<accession>E1P5C6</accession>
<accession>P78553</accession>
<accession>Q92846</accession>
<evidence type="ECO:0000250" key="1">
    <source>
        <dbReference type="UniProtKB" id="O54689"/>
    </source>
</evidence>
<evidence type="ECO:0000255" key="2"/>
<evidence type="ECO:0000255" key="3">
    <source>
        <dbReference type="PROSITE-ProRule" id="PRU00521"/>
    </source>
</evidence>
<evidence type="ECO:0000269" key="4">
    <source>
    </source>
</evidence>
<evidence type="ECO:0000269" key="5">
    <source>
    </source>
</evidence>
<evidence type="ECO:0000269" key="6">
    <source>
    </source>
</evidence>
<evidence type="ECO:0000269" key="7">
    <source>
    </source>
</evidence>
<evidence type="ECO:0000269" key="8">
    <source>
    </source>
</evidence>
<evidence type="ECO:0000269" key="9">
    <source>
    </source>
</evidence>
<evidence type="ECO:0000303" key="10">
    <source>
    </source>
</evidence>
<evidence type="ECO:0000303" key="11">
    <source>
    </source>
</evidence>
<evidence type="ECO:0000305" key="12"/>
<evidence type="ECO:0007829" key="13">
    <source>
        <dbReference type="PDB" id="6WWZ"/>
    </source>
</evidence>
<feature type="chain" id="PRO_0000069286" description="C-C chemokine receptor type 6">
    <location>
        <begin position="1"/>
        <end position="374"/>
    </location>
</feature>
<feature type="topological domain" description="Extracellular" evidence="2">
    <location>
        <begin position="1"/>
        <end position="47"/>
    </location>
</feature>
<feature type="transmembrane region" description="Helical; Name=1" evidence="2">
    <location>
        <begin position="48"/>
        <end position="74"/>
    </location>
</feature>
<feature type="topological domain" description="Cytoplasmic" evidence="2">
    <location>
        <begin position="75"/>
        <end position="83"/>
    </location>
</feature>
<feature type="transmembrane region" description="Helical; Name=2" evidence="2">
    <location>
        <begin position="84"/>
        <end position="104"/>
    </location>
</feature>
<feature type="topological domain" description="Extracellular" evidence="2">
    <location>
        <begin position="105"/>
        <end position="119"/>
    </location>
</feature>
<feature type="transmembrane region" description="Helical; Name=3" evidence="2">
    <location>
        <begin position="120"/>
        <end position="141"/>
    </location>
</feature>
<feature type="topological domain" description="Cytoplasmic" evidence="2">
    <location>
        <begin position="142"/>
        <end position="159"/>
    </location>
</feature>
<feature type="transmembrane region" description="Helical; Name=4" evidence="2">
    <location>
        <begin position="160"/>
        <end position="180"/>
    </location>
</feature>
<feature type="topological domain" description="Extracellular" evidence="2">
    <location>
        <begin position="181"/>
        <end position="211"/>
    </location>
</feature>
<feature type="transmembrane region" description="Helical; Name=5" evidence="2">
    <location>
        <begin position="212"/>
        <end position="238"/>
    </location>
</feature>
<feature type="topological domain" description="Cytoplasmic" evidence="2">
    <location>
        <begin position="239"/>
        <end position="254"/>
    </location>
</feature>
<feature type="transmembrane region" description="Helical; Name=6" evidence="2">
    <location>
        <begin position="255"/>
        <end position="279"/>
    </location>
</feature>
<feature type="topological domain" description="Extracellular" evidence="2">
    <location>
        <begin position="280"/>
        <end position="303"/>
    </location>
</feature>
<feature type="transmembrane region" description="Helical; Name=7" evidence="2">
    <location>
        <begin position="304"/>
        <end position="321"/>
    </location>
</feature>
<feature type="topological domain" description="Cytoplasmic" evidence="2">
    <location>
        <begin position="322"/>
        <end position="374"/>
    </location>
</feature>
<feature type="glycosylation site" description="N-linked (GlcNAc...) asparagine" evidence="2">
    <location>
        <position position="7"/>
    </location>
</feature>
<feature type="glycosylation site" description="N-linked (GlcNAc...) asparagine" evidence="2">
    <location>
        <position position="23"/>
    </location>
</feature>
<feature type="disulfide bond" evidence="4">
    <location>
        <begin position="118"/>
        <end position="197"/>
    </location>
</feature>
<feature type="mutagenesis site" description="No loss of calcium flux but loss of chemotaxis in response to CCL20 stimulation. No effect on cell surface expression." evidence="4">
    <original>C</original>
    <variation>A</variation>
    <location>
        <position position="36"/>
    </location>
</feature>
<feature type="mutagenesis site" description="Loss of calcium flux and chemotaxis in response to CCL20 stimulation. No effect on cell surface expression." evidence="4">
    <original>C</original>
    <variation>D</variation>
    <variation>G</variation>
    <location>
        <position position="36"/>
    </location>
</feature>
<feature type="mutagenesis site" description="No loss of calcium flux but loss of chemotaxis in response to CCL20 stimulation, impaired CCL20-binding and no effect on cell surface expression; when associated with or without S-288. Loss of calcium flux in response to CCL20 stimulation and significant reduction in cell surface expression; when associated with S-118; S-197 and S-288." evidence="4">
    <original>C</original>
    <variation>S</variation>
    <location>
        <position position="36"/>
    </location>
</feature>
<feature type="mutagenesis site" description="No effect on calcium flux and chemotaxis in response to CCL20 stimulation. No effect on cell surface expression." evidence="4">
    <original>C</original>
    <variation>S</variation>
    <location>
        <position position="57"/>
    </location>
</feature>
<feature type="mutagenesis site" description="Loss of calcium flux and chemotaxis in response to CCL20 stimulation, impaired CCL20-binding and significant reduction in cell surface expression; when associated with or without S-197. Loss of calcium flux in response to CCL20 stimulation and significant reduction in cell surface expression; when associated with S-36; S-197 and S-288." evidence="4">
    <original>C</original>
    <variation>S</variation>
    <location>
        <position position="118"/>
    </location>
</feature>
<feature type="mutagenesis site" description="No effect on calcium flux and chemotaxis in response to CCL20 stimulation. No effect on cell surface expression." evidence="4">
    <original>C</original>
    <variation>S</variation>
    <location>
        <position position="131"/>
    </location>
</feature>
<feature type="mutagenesis site" description="No effect on calcium flux and chemotaxis in response to CCL20 stimulation. No effect on cell surface expression." evidence="4">
    <original>C</original>
    <variation>S</variation>
    <location>
        <position position="138"/>
    </location>
</feature>
<feature type="mutagenesis site" description="No effect on calcium flux and chemotaxis in response to CCL20 stimulation. No effect on cell surface expression." evidence="4">
    <original>C</original>
    <variation>S</variation>
    <location>
        <position position="168"/>
    </location>
</feature>
<feature type="mutagenesis site" description="Loss of calcium flux and chemotaxis in response to CCL20 stimulation, impaired CCL20-binding and significant reduction in cell surface expression; when associated with or without S-118. Loss of calcium flux in response to CCL20 stimulation and significant reduction in cell surface expression; when associated with S-36; S-118 and S-288." evidence="4">
    <original>C</original>
    <variation>S</variation>
    <location>
        <position position="197"/>
    </location>
</feature>
<feature type="mutagenesis site" description="No effect on calcium flux and chemotaxis in response to CCL20 stimulation. No effect on cell surface expression." evidence="4">
    <original>C</original>
    <variation>S</variation>
    <location>
        <position position="233"/>
    </location>
</feature>
<feature type="mutagenesis site" description="No effect on calcium flux and chemotaxis in response to CCL20 stimulation. No effect on cell surface expression." evidence="4">
    <original>C</original>
    <variation>S</variation>
    <location>
        <position position="266"/>
    </location>
</feature>
<feature type="mutagenesis site" description="No loss of calcium flux but loss of chemotaxis in response to CCL20 stimulation. No effect on cell surface expression." evidence="4">
    <original>C</original>
    <variation>A</variation>
    <variation>G</variation>
    <variation>R</variation>
    <location>
        <position position="288"/>
    </location>
</feature>
<feature type="mutagenesis site" description="No loss of calcium flux but loss of chemotaxis in response to CCL20 stimulation, impaired CCL20-binding and no effect on cell surface expression; when associated with or without S-36. Loss of calcium flux in response to CCL20 stimulation and significant reduction in cell surface expression; when associated with S-36; S-118 and S-197." evidence="4">
    <original>C</original>
    <variation>S</variation>
    <location>
        <position position="288"/>
    </location>
</feature>
<feature type="mutagenesis site" description="No effect on calcium flux and chemotaxis in response to CCL20 stimulation. No effect on cell surface expression." evidence="4">
    <original>C</original>
    <variation>S</variation>
    <location>
        <position position="309"/>
    </location>
</feature>
<feature type="mutagenesis site" description="No effect on calcium flux and chemotaxis in response to CCL20 stimulation. No effect on cell surface expression." evidence="4">
    <original>C</original>
    <variation>S</variation>
    <location>
        <position position="310"/>
    </location>
</feature>
<feature type="mutagenesis site" description="Reduced calcium flux and chemotaxis in response to CCL20 stimulation, and reduced CCL20-binding. No effect on cell surface expression." evidence="4">
    <original>C</original>
    <variation>S</variation>
    <location>
        <position position="336"/>
    </location>
</feature>
<feature type="mutagenesis site" description="No effect on calcium flux and chemotaxis in response to CCL20 stimulation. No effect on CCL20-binding and cell surface expression." evidence="4">
    <original>C</original>
    <variation>S</variation>
    <location>
        <position position="348"/>
    </location>
</feature>
<feature type="sequence conflict" description="In Ref. 4; AAB06949." evidence="12" ref="4">
    <original>G</original>
    <variation>A</variation>
    <location>
        <position position="60"/>
    </location>
</feature>
<feature type="sequence conflict" description="In Ref. 4; AAB06949." evidence="12" ref="4">
    <original>Y</original>
    <variation>N</variation>
    <location>
        <position position="74"/>
    </location>
</feature>
<feature type="sequence conflict" description="In Ref. 4; AAB06949." evidence="12" ref="4">
    <original>L</original>
    <variation>V</variation>
    <location>
        <position position="86"/>
    </location>
</feature>
<feature type="sequence conflict" description="In Ref. 5; AAC51124/AAC51125." evidence="12" ref="5">
    <original>S</original>
    <variation>T</variation>
    <location>
        <position position="164"/>
    </location>
</feature>
<feature type="sequence conflict" description="In Ref. 4; AAB06949." evidence="12" ref="4">
    <original>T</original>
    <variation>S</variation>
    <location>
        <position position="182"/>
    </location>
</feature>
<feature type="sequence conflict" description="In Ref. 4; AAB06949." evidence="12" ref="4">
    <original>Q</original>
    <variation>L</variation>
    <location>
        <position position="192"/>
    </location>
</feature>
<feature type="sequence conflict" description="In Ref. 4; AAB06949." evidence="12" ref="4">
    <original>E</original>
    <variation>V</variation>
    <location>
        <position position="206"/>
    </location>
</feature>
<feature type="sequence conflict" description="In Ref. 4; AAB06949." evidence="12" ref="4">
    <original>I</original>
    <variation>F</variation>
    <location>
        <position position="225"/>
    </location>
</feature>
<feature type="sequence conflict" description="In Ref. 4; AAB06949." evidence="12" ref="4">
    <original>SSFTM</original>
    <variation>VVLHYVIES</variation>
    <location>
        <begin position="370"/>
        <end position="374"/>
    </location>
</feature>
<feature type="strand" evidence="13">
    <location>
        <begin position="31"/>
        <end position="33"/>
    </location>
</feature>
<feature type="helix" evidence="13">
    <location>
        <begin position="40"/>
        <end position="72"/>
    </location>
</feature>
<feature type="helix" evidence="13">
    <location>
        <begin position="81"/>
        <end position="97"/>
    </location>
</feature>
<feature type="helix" evidence="13">
    <location>
        <begin position="100"/>
        <end position="108"/>
    </location>
</feature>
<feature type="helix" evidence="13">
    <location>
        <begin position="115"/>
        <end position="148"/>
    </location>
</feature>
<feature type="helix" evidence="13">
    <location>
        <begin position="150"/>
        <end position="156"/>
    </location>
</feature>
<feature type="helix" evidence="13">
    <location>
        <begin position="161"/>
        <end position="185"/>
    </location>
</feature>
<feature type="strand" evidence="13">
    <location>
        <begin position="186"/>
        <end position="189"/>
    </location>
</feature>
<feature type="strand" evidence="13">
    <location>
        <begin position="191"/>
        <end position="194"/>
    </location>
</feature>
<feature type="strand" evidence="13">
    <location>
        <begin position="196"/>
        <end position="199"/>
    </location>
</feature>
<feature type="strand" evidence="13">
    <location>
        <begin position="203"/>
        <end position="205"/>
    </location>
</feature>
<feature type="helix" evidence="13">
    <location>
        <begin position="207"/>
        <end position="241"/>
    </location>
</feature>
<feature type="helix" evidence="13">
    <location>
        <begin position="249"/>
        <end position="279"/>
    </location>
</feature>
<feature type="helix" evidence="13">
    <location>
        <begin position="288"/>
        <end position="319"/>
    </location>
</feature>
<feature type="helix" evidence="13">
    <location>
        <begin position="321"/>
        <end position="334"/>
    </location>
</feature>